<name>Y1244_LISIN</name>
<sequence>MARPLKEGLDYFPLDVDADYDDKFQLIETLHGPTGFAIMIKLFMKIYSQNFYYKWTETEQILFAKRVNVDINTLKTVVNDCIKYDLFDNNLFSEFQILTSLGVQERYFTAIGRRKKQIVVLEYLLLDRPEVINLCPKIVFANINVVNDDINAEQEELMPALSAQTKGKESKVNESKAVVSEQEKLPEKIVKEKPTTTAYKFWEENVAITGLSEFDRELLKKLISLGGNELTVHAMKKAIELNRRRMKTVDTVLRGWLDNGVKTTAEADEQEKNWNGGAKKNARAEPAKQEIKISDQYNFGATRTD</sequence>
<comment type="similarity">
    <text evidence="2">Belongs to the DnaB/DnaD family.</text>
</comment>
<evidence type="ECO:0000256" key="1">
    <source>
        <dbReference type="SAM" id="MobiDB-lite"/>
    </source>
</evidence>
<evidence type="ECO:0000305" key="2"/>
<gene>
    <name type="ordered locus">lin1244</name>
</gene>
<gene>
    <name type="ordered locus">lin1753</name>
</gene>
<proteinExistence type="inferred from homology"/>
<reference key="1">
    <citation type="journal article" date="2001" name="Science">
        <title>Comparative genomics of Listeria species.</title>
        <authorList>
            <person name="Glaser P."/>
            <person name="Frangeul L."/>
            <person name="Buchrieser C."/>
            <person name="Rusniok C."/>
            <person name="Amend A."/>
            <person name="Baquero F."/>
            <person name="Berche P."/>
            <person name="Bloecker H."/>
            <person name="Brandt P."/>
            <person name="Chakraborty T."/>
            <person name="Charbit A."/>
            <person name="Chetouani F."/>
            <person name="Couve E."/>
            <person name="de Daruvar A."/>
            <person name="Dehoux P."/>
            <person name="Domann E."/>
            <person name="Dominguez-Bernal G."/>
            <person name="Duchaud E."/>
            <person name="Durant L."/>
            <person name="Dussurget O."/>
            <person name="Entian K.-D."/>
            <person name="Fsihi H."/>
            <person name="Garcia-del Portillo F."/>
            <person name="Garrido P."/>
            <person name="Gautier L."/>
            <person name="Goebel W."/>
            <person name="Gomez-Lopez N."/>
            <person name="Hain T."/>
            <person name="Hauf J."/>
            <person name="Jackson D."/>
            <person name="Jones L.-M."/>
            <person name="Kaerst U."/>
            <person name="Kreft J."/>
            <person name="Kuhn M."/>
            <person name="Kunst F."/>
            <person name="Kurapkat G."/>
            <person name="Madueno E."/>
            <person name="Maitournam A."/>
            <person name="Mata Vicente J."/>
            <person name="Ng E."/>
            <person name="Nedjari H."/>
            <person name="Nordsiek G."/>
            <person name="Novella S."/>
            <person name="de Pablos B."/>
            <person name="Perez-Diaz J.-C."/>
            <person name="Purcell R."/>
            <person name="Remmel B."/>
            <person name="Rose M."/>
            <person name="Schlueter T."/>
            <person name="Simoes N."/>
            <person name="Tierrez A."/>
            <person name="Vazquez-Boland J.-A."/>
            <person name="Voss H."/>
            <person name="Wehland J."/>
            <person name="Cossart P."/>
        </authorList>
    </citation>
    <scope>NUCLEOTIDE SEQUENCE [LARGE SCALE GENOMIC DNA]</scope>
    <source>
        <strain>ATCC BAA-680 / CLIP 11262</strain>
    </source>
</reference>
<protein>
    <recommendedName>
        <fullName>Uncharacterized phage-related protein Lin1244/Lin1753</fullName>
    </recommendedName>
</protein>
<accession>Q925X2</accession>
<feature type="chain" id="PRO_0000210809" description="Uncharacterized phage-related protein Lin1244/Lin1753">
    <location>
        <begin position="1"/>
        <end position="305"/>
    </location>
</feature>
<feature type="region of interest" description="Disordered" evidence="1">
    <location>
        <begin position="267"/>
        <end position="287"/>
    </location>
</feature>
<dbReference type="EMBL" id="AL596168">
    <property type="protein sequence ID" value="CAC96475.1"/>
    <property type="molecule type" value="Genomic_DNA"/>
</dbReference>
<dbReference type="EMBL" id="AL596169">
    <property type="protein sequence ID" value="CAC96984.1"/>
    <property type="molecule type" value="Genomic_DNA"/>
</dbReference>
<dbReference type="PIR" id="AC1588">
    <property type="entry name" value="AC1588"/>
</dbReference>
<dbReference type="PIR" id="AH1651">
    <property type="entry name" value="AH1651"/>
</dbReference>
<dbReference type="RefSeq" id="WP_010990857.1">
    <property type="nucleotide sequence ID" value="NC_003212.1"/>
</dbReference>
<dbReference type="SMR" id="Q925X2"/>
<dbReference type="STRING" id="272626.gene:17565575"/>
<dbReference type="KEGG" id="lin:lin1244"/>
<dbReference type="KEGG" id="lin:lin1753"/>
<dbReference type="eggNOG" id="COG3935">
    <property type="taxonomic scope" value="Bacteria"/>
</dbReference>
<dbReference type="HOGENOM" id="CLU_074315_1_0_9"/>
<dbReference type="OrthoDB" id="1047417at2"/>
<dbReference type="Proteomes" id="UP000002513">
    <property type="component" value="Chromosome"/>
</dbReference>
<dbReference type="Gene3D" id="1.10.10.630">
    <property type="entry name" value="DnaD domain-like"/>
    <property type="match status" value="1"/>
</dbReference>
<dbReference type="InterPro" id="IPR034829">
    <property type="entry name" value="DnaD-like_sf"/>
</dbReference>
<dbReference type="InterPro" id="IPR006343">
    <property type="entry name" value="DnaD_dom"/>
</dbReference>
<dbReference type="InterPro" id="IPR025400">
    <property type="entry name" value="Lin1244/Lin1753-like_N"/>
</dbReference>
<dbReference type="NCBIfam" id="TIGR01446">
    <property type="entry name" value="DnaD_dom"/>
    <property type="match status" value="1"/>
</dbReference>
<dbReference type="PANTHER" id="PTHR39196">
    <property type="entry name" value="PRIMOSOME, DNAD SUBUNIT"/>
    <property type="match status" value="1"/>
</dbReference>
<dbReference type="PANTHER" id="PTHR39196:SF1">
    <property type="entry name" value="PRIMOSOME, DNAD SUBUNIT"/>
    <property type="match status" value="1"/>
</dbReference>
<dbReference type="Pfam" id="PF07261">
    <property type="entry name" value="DnaB_2"/>
    <property type="match status" value="1"/>
</dbReference>
<dbReference type="Pfam" id="PF14297">
    <property type="entry name" value="Lin1244_N"/>
    <property type="match status" value="1"/>
</dbReference>
<dbReference type="SUPFAM" id="SSF158499">
    <property type="entry name" value="DnaD domain-like"/>
    <property type="match status" value="1"/>
</dbReference>
<organism>
    <name type="scientific">Listeria innocua serovar 6a (strain ATCC BAA-680 / CLIP 11262)</name>
    <dbReference type="NCBI Taxonomy" id="272626"/>
    <lineage>
        <taxon>Bacteria</taxon>
        <taxon>Bacillati</taxon>
        <taxon>Bacillota</taxon>
        <taxon>Bacilli</taxon>
        <taxon>Bacillales</taxon>
        <taxon>Listeriaceae</taxon>
        <taxon>Listeria</taxon>
    </lineage>
</organism>